<accession>A6LAI2</accession>
<dbReference type="EMBL" id="CP000140">
    <property type="protein sequence ID" value="ABR42696.1"/>
    <property type="molecule type" value="Genomic_DNA"/>
</dbReference>
<dbReference type="RefSeq" id="WP_005857282.1">
    <property type="nucleotide sequence ID" value="NZ_LR215978.1"/>
</dbReference>
<dbReference type="SMR" id="A6LAI2"/>
<dbReference type="STRING" id="435591.BDI_0928"/>
<dbReference type="PaxDb" id="435591-BDI_0928"/>
<dbReference type="GeneID" id="93525849"/>
<dbReference type="KEGG" id="pdi:BDI_0928"/>
<dbReference type="eggNOG" id="COG3004">
    <property type="taxonomic scope" value="Bacteria"/>
</dbReference>
<dbReference type="HOGENOM" id="CLU_015803_1_2_10"/>
<dbReference type="BioCyc" id="PDIS435591:G1G5A-961-MONOMER"/>
<dbReference type="Proteomes" id="UP000000566">
    <property type="component" value="Chromosome"/>
</dbReference>
<dbReference type="GO" id="GO:0005886">
    <property type="term" value="C:plasma membrane"/>
    <property type="evidence" value="ECO:0007669"/>
    <property type="project" value="UniProtKB-SubCell"/>
</dbReference>
<dbReference type="GO" id="GO:0015385">
    <property type="term" value="F:sodium:proton antiporter activity"/>
    <property type="evidence" value="ECO:0007669"/>
    <property type="project" value="TreeGrafter"/>
</dbReference>
<dbReference type="GO" id="GO:0006885">
    <property type="term" value="P:regulation of pH"/>
    <property type="evidence" value="ECO:0007669"/>
    <property type="project" value="InterPro"/>
</dbReference>
<dbReference type="Gene3D" id="1.20.1530.10">
    <property type="entry name" value="Na+/H+ antiporter like domain"/>
    <property type="match status" value="1"/>
</dbReference>
<dbReference type="HAMAP" id="MF_01844">
    <property type="entry name" value="NhaA"/>
    <property type="match status" value="1"/>
</dbReference>
<dbReference type="InterPro" id="IPR023171">
    <property type="entry name" value="Na/H_antiporter_dom_sf"/>
</dbReference>
<dbReference type="InterPro" id="IPR004670">
    <property type="entry name" value="NhaA"/>
</dbReference>
<dbReference type="NCBIfam" id="TIGR00773">
    <property type="entry name" value="NhaA"/>
    <property type="match status" value="1"/>
</dbReference>
<dbReference type="PANTHER" id="PTHR30341:SF0">
    <property type="entry name" value="NA(+)_H(+) ANTIPORTER NHAA"/>
    <property type="match status" value="1"/>
</dbReference>
<dbReference type="PANTHER" id="PTHR30341">
    <property type="entry name" value="SODIUM ION/PROTON ANTIPORTER NHAA-RELATED"/>
    <property type="match status" value="1"/>
</dbReference>
<dbReference type="Pfam" id="PF06965">
    <property type="entry name" value="Na_H_antiport_1"/>
    <property type="match status" value="1"/>
</dbReference>
<organism>
    <name type="scientific">Parabacteroides distasonis (strain ATCC 8503 / DSM 20701 / CIP 104284 / JCM 5825 / NCTC 11152)</name>
    <dbReference type="NCBI Taxonomy" id="435591"/>
    <lineage>
        <taxon>Bacteria</taxon>
        <taxon>Pseudomonadati</taxon>
        <taxon>Bacteroidota</taxon>
        <taxon>Bacteroidia</taxon>
        <taxon>Bacteroidales</taxon>
        <taxon>Tannerellaceae</taxon>
        <taxon>Parabacteroides</taxon>
    </lineage>
</organism>
<reference key="1">
    <citation type="journal article" date="2007" name="PLoS Biol.">
        <title>Evolution of symbiotic bacteria in the distal human intestine.</title>
        <authorList>
            <person name="Xu J."/>
            <person name="Mahowald M.A."/>
            <person name="Ley R.E."/>
            <person name="Lozupone C.A."/>
            <person name="Hamady M."/>
            <person name="Martens E.C."/>
            <person name="Henrissat B."/>
            <person name="Coutinho P.M."/>
            <person name="Minx P."/>
            <person name="Latreille P."/>
            <person name="Cordum H."/>
            <person name="Van Brunt A."/>
            <person name="Kim K."/>
            <person name="Fulton R.S."/>
            <person name="Fulton L.A."/>
            <person name="Clifton S.W."/>
            <person name="Wilson R.K."/>
            <person name="Knight R.D."/>
            <person name="Gordon J.I."/>
        </authorList>
    </citation>
    <scope>NUCLEOTIDE SEQUENCE [LARGE SCALE GENOMIC DNA]</scope>
    <source>
        <strain>ATCC 8503 / DSM 20701 / CIP 104284 / JCM 5825 / NCTC 11152</strain>
    </source>
</reference>
<sequence>MDRTINVILKPLRRFAIQKPNASLLLFAATIVAMVLANSPWADRYHQLLAFPIDLQAGQFNFFAHHGETMSMLAFVNDALMAVFFFVIGLEIKQEVLIGELSSVRKALLPIIAACGGMIVPVLFYMLVCNTPPEVNGAAIPMATDIAFALAVLGLLGKRVPLSMRIFLTALAVVDDIGGIIIIALFYSGHIAFEPLLISLIVLALLYVGGKFRVHNRLFFYIGGFIVWLLFLESGIHPTIAGVLIAFTVPARPVVKLDDFTCDMTGYLNMLDYTEVRQSRKAEVLTPTQIQVLNNIHTLADKTISPLQTIADKLHPLVNYVILPLFAFVNAGVTFGDIQPQTLVNVPLAVFVGLFVGKTLGIFSFSYLFACTPFASMPTGMSKRNLFGVSMLGGIGFTVALFIANLSFDGSTAAGADLLNQAKLGVFTGSFISGLCGYLVLKWVLPKEKVETI</sequence>
<protein>
    <recommendedName>
        <fullName evidence="1">Na(+)/H(+) antiporter NhaA</fullName>
    </recommendedName>
    <alternativeName>
        <fullName evidence="1">Sodium/proton antiporter NhaA</fullName>
    </alternativeName>
</protein>
<gene>
    <name evidence="1" type="primary">nhaA</name>
    <name type="ordered locus">BDI_0928</name>
</gene>
<comment type="function">
    <text evidence="1">Na(+)/H(+) antiporter that extrudes sodium in exchange for external protons.</text>
</comment>
<comment type="catalytic activity">
    <reaction evidence="1">
        <text>Na(+)(in) + 2 H(+)(out) = Na(+)(out) + 2 H(+)(in)</text>
        <dbReference type="Rhea" id="RHEA:29251"/>
        <dbReference type="ChEBI" id="CHEBI:15378"/>
        <dbReference type="ChEBI" id="CHEBI:29101"/>
    </reaction>
    <physiologicalReaction direction="left-to-right" evidence="1">
        <dbReference type="Rhea" id="RHEA:29252"/>
    </physiologicalReaction>
</comment>
<comment type="subcellular location">
    <subcellularLocation>
        <location evidence="1">Cell inner membrane</location>
        <topology evidence="1">Multi-pass membrane protein</topology>
    </subcellularLocation>
</comment>
<comment type="similarity">
    <text evidence="1">Belongs to the NhaA Na(+)/H(+) (TC 2.A.33) antiporter family.</text>
</comment>
<feature type="chain" id="PRO_0000334354" description="Na(+)/H(+) antiporter NhaA">
    <location>
        <begin position="1"/>
        <end position="453"/>
    </location>
</feature>
<feature type="transmembrane region" description="Helical" evidence="1">
    <location>
        <begin position="22"/>
        <end position="42"/>
    </location>
</feature>
<feature type="transmembrane region" description="Helical" evidence="1">
    <location>
        <begin position="72"/>
        <end position="92"/>
    </location>
</feature>
<feature type="transmembrane region" description="Helical" evidence="1">
    <location>
        <begin position="108"/>
        <end position="128"/>
    </location>
</feature>
<feature type="transmembrane region" description="Helical" evidence="1">
    <location>
        <begin position="137"/>
        <end position="157"/>
    </location>
</feature>
<feature type="transmembrane region" description="Helical" evidence="1">
    <location>
        <begin position="166"/>
        <end position="186"/>
    </location>
</feature>
<feature type="transmembrane region" description="Helical" evidence="1">
    <location>
        <begin position="189"/>
        <end position="209"/>
    </location>
</feature>
<feature type="transmembrane region" description="Helical" evidence="1">
    <location>
        <begin position="218"/>
        <end position="238"/>
    </location>
</feature>
<feature type="transmembrane region" description="Helical" evidence="1">
    <location>
        <begin position="316"/>
        <end position="336"/>
    </location>
</feature>
<feature type="transmembrane region" description="Helical" evidence="1">
    <location>
        <begin position="343"/>
        <end position="363"/>
    </location>
</feature>
<feature type="transmembrane region" description="Helical" evidence="1">
    <location>
        <begin position="386"/>
        <end position="406"/>
    </location>
</feature>
<feature type="transmembrane region" description="Helical" evidence="1">
    <location>
        <begin position="424"/>
        <end position="444"/>
    </location>
</feature>
<proteinExistence type="inferred from homology"/>
<keyword id="KW-0050">Antiport</keyword>
<keyword id="KW-0997">Cell inner membrane</keyword>
<keyword id="KW-1003">Cell membrane</keyword>
<keyword id="KW-0406">Ion transport</keyword>
<keyword id="KW-0472">Membrane</keyword>
<keyword id="KW-1185">Reference proteome</keyword>
<keyword id="KW-0915">Sodium</keyword>
<keyword id="KW-0739">Sodium transport</keyword>
<keyword id="KW-0812">Transmembrane</keyword>
<keyword id="KW-1133">Transmembrane helix</keyword>
<keyword id="KW-0813">Transport</keyword>
<evidence type="ECO:0000255" key="1">
    <source>
        <dbReference type="HAMAP-Rule" id="MF_01844"/>
    </source>
</evidence>
<name>NHAA_PARD8</name>